<comment type="similarity">
    <text evidence="1">Belongs to the UPF0246 family.</text>
</comment>
<name>Y3597_MARMS</name>
<organism>
    <name type="scientific">Marinomonas sp. (strain MWYL1)</name>
    <dbReference type="NCBI Taxonomy" id="400668"/>
    <lineage>
        <taxon>Bacteria</taxon>
        <taxon>Pseudomonadati</taxon>
        <taxon>Pseudomonadota</taxon>
        <taxon>Gammaproteobacteria</taxon>
        <taxon>Oceanospirillales</taxon>
        <taxon>Oceanospirillaceae</taxon>
        <taxon>Marinomonas</taxon>
    </lineage>
</organism>
<sequence length="260" mass="29716">MKFLISPAKTLDLTSTPSIDTFSLPELLDESKELIDTIKPYSPADIASLMKLSDKLATLNVSRYQEWQKEHTRDNSRPAIYTFMGDVYTGLDAYSLNESDMKYAQKSLRILSGLYGLLKPLDLMQAYRLEMGTSLKNDRGSNLYQFWGDIIVDKINETLKEGELLVNLASNEYFKAVNKKKLTSPLISPNFLDEKNGKFKVISFYAKKARGLMARYLIENRCETLEELKAFDLAGYRYDPQQSTKDTPVFIRPESAEPKK</sequence>
<protein>
    <recommendedName>
        <fullName evidence="1">UPF0246 protein Mmwyl1_3597</fullName>
    </recommendedName>
</protein>
<proteinExistence type="inferred from homology"/>
<feature type="chain" id="PRO_1000082769" description="UPF0246 protein Mmwyl1_3597">
    <location>
        <begin position="1"/>
        <end position="260"/>
    </location>
</feature>
<accession>A6W1C0</accession>
<gene>
    <name type="ordered locus">Mmwyl1_3597</name>
</gene>
<evidence type="ECO:0000255" key="1">
    <source>
        <dbReference type="HAMAP-Rule" id="MF_00652"/>
    </source>
</evidence>
<reference key="1">
    <citation type="submission" date="2007-06" db="EMBL/GenBank/DDBJ databases">
        <title>Complete sequence of Marinomonas sp. MWYL1.</title>
        <authorList>
            <consortium name="US DOE Joint Genome Institute"/>
            <person name="Copeland A."/>
            <person name="Lucas S."/>
            <person name="Lapidus A."/>
            <person name="Barry K."/>
            <person name="Glavina del Rio T."/>
            <person name="Dalin E."/>
            <person name="Tice H."/>
            <person name="Pitluck S."/>
            <person name="Kiss H."/>
            <person name="Brettin T."/>
            <person name="Bruce D."/>
            <person name="Detter J.C."/>
            <person name="Han C."/>
            <person name="Schmutz J."/>
            <person name="Larimer F."/>
            <person name="Land M."/>
            <person name="Hauser L."/>
            <person name="Kyrpides N."/>
            <person name="Kim E."/>
            <person name="Johnston A.W.B."/>
            <person name="Todd J.D."/>
            <person name="Rogers R."/>
            <person name="Wexler M."/>
            <person name="Bond P.L."/>
            <person name="Li Y."/>
            <person name="Richardson P."/>
        </authorList>
    </citation>
    <scope>NUCLEOTIDE SEQUENCE [LARGE SCALE GENOMIC DNA]</scope>
    <source>
        <strain>MWYL1</strain>
    </source>
</reference>
<dbReference type="EMBL" id="CP000749">
    <property type="protein sequence ID" value="ABR72499.1"/>
    <property type="molecule type" value="Genomic_DNA"/>
</dbReference>
<dbReference type="SMR" id="A6W1C0"/>
<dbReference type="STRING" id="400668.Mmwyl1_3597"/>
<dbReference type="KEGG" id="mmw:Mmwyl1_3597"/>
<dbReference type="eggNOG" id="COG3022">
    <property type="taxonomic scope" value="Bacteria"/>
</dbReference>
<dbReference type="HOGENOM" id="CLU_061989_0_0_6"/>
<dbReference type="OrthoDB" id="9777133at2"/>
<dbReference type="GO" id="GO:0005829">
    <property type="term" value="C:cytosol"/>
    <property type="evidence" value="ECO:0007669"/>
    <property type="project" value="TreeGrafter"/>
</dbReference>
<dbReference type="GO" id="GO:0033194">
    <property type="term" value="P:response to hydroperoxide"/>
    <property type="evidence" value="ECO:0007669"/>
    <property type="project" value="TreeGrafter"/>
</dbReference>
<dbReference type="HAMAP" id="MF_00652">
    <property type="entry name" value="UPF0246"/>
    <property type="match status" value="1"/>
</dbReference>
<dbReference type="InterPro" id="IPR005583">
    <property type="entry name" value="YaaA"/>
</dbReference>
<dbReference type="NCBIfam" id="NF002541">
    <property type="entry name" value="PRK02101.1-1"/>
    <property type="match status" value="1"/>
</dbReference>
<dbReference type="NCBIfam" id="NF002542">
    <property type="entry name" value="PRK02101.1-3"/>
    <property type="match status" value="1"/>
</dbReference>
<dbReference type="NCBIfam" id="NF002543">
    <property type="entry name" value="PRK02101.1-4"/>
    <property type="match status" value="1"/>
</dbReference>
<dbReference type="PANTHER" id="PTHR30283:SF4">
    <property type="entry name" value="PEROXIDE STRESS RESISTANCE PROTEIN YAAA"/>
    <property type="match status" value="1"/>
</dbReference>
<dbReference type="PANTHER" id="PTHR30283">
    <property type="entry name" value="PEROXIDE STRESS RESPONSE PROTEIN YAAA"/>
    <property type="match status" value="1"/>
</dbReference>
<dbReference type="Pfam" id="PF03883">
    <property type="entry name" value="H2O2_YaaD"/>
    <property type="match status" value="1"/>
</dbReference>